<feature type="chain" id="PRO_1000141757" description="DNA-directed RNA polymerase subunit beta'">
    <location>
        <begin position="1"/>
        <end position="1433"/>
    </location>
</feature>
<feature type="binding site" evidence="1">
    <location>
        <position position="66"/>
    </location>
    <ligand>
        <name>Zn(2+)</name>
        <dbReference type="ChEBI" id="CHEBI:29105"/>
        <label>1</label>
    </ligand>
</feature>
<feature type="binding site" evidence="1">
    <location>
        <position position="68"/>
    </location>
    <ligand>
        <name>Zn(2+)</name>
        <dbReference type="ChEBI" id="CHEBI:29105"/>
        <label>1</label>
    </ligand>
</feature>
<feature type="binding site" evidence="1">
    <location>
        <position position="81"/>
    </location>
    <ligand>
        <name>Zn(2+)</name>
        <dbReference type="ChEBI" id="CHEBI:29105"/>
        <label>1</label>
    </ligand>
</feature>
<feature type="binding site" evidence="1">
    <location>
        <position position="84"/>
    </location>
    <ligand>
        <name>Zn(2+)</name>
        <dbReference type="ChEBI" id="CHEBI:29105"/>
        <label>1</label>
    </ligand>
</feature>
<feature type="binding site" evidence="1">
    <location>
        <position position="474"/>
    </location>
    <ligand>
        <name>Mg(2+)</name>
        <dbReference type="ChEBI" id="CHEBI:18420"/>
    </ligand>
</feature>
<feature type="binding site" evidence="1">
    <location>
        <position position="476"/>
    </location>
    <ligand>
        <name>Mg(2+)</name>
        <dbReference type="ChEBI" id="CHEBI:18420"/>
    </ligand>
</feature>
<feature type="binding site" evidence="1">
    <location>
        <position position="478"/>
    </location>
    <ligand>
        <name>Mg(2+)</name>
        <dbReference type="ChEBI" id="CHEBI:18420"/>
    </ligand>
</feature>
<feature type="binding site" evidence="1">
    <location>
        <position position="823"/>
    </location>
    <ligand>
        <name>Zn(2+)</name>
        <dbReference type="ChEBI" id="CHEBI:29105"/>
        <label>2</label>
    </ligand>
</feature>
<feature type="binding site" evidence="1">
    <location>
        <position position="897"/>
    </location>
    <ligand>
        <name>Zn(2+)</name>
        <dbReference type="ChEBI" id="CHEBI:29105"/>
        <label>2</label>
    </ligand>
</feature>
<feature type="binding site" evidence="1">
    <location>
        <position position="904"/>
    </location>
    <ligand>
        <name>Zn(2+)</name>
        <dbReference type="ChEBI" id="CHEBI:29105"/>
        <label>2</label>
    </ligand>
</feature>
<feature type="binding site" evidence="1">
    <location>
        <position position="907"/>
    </location>
    <ligand>
        <name>Zn(2+)</name>
        <dbReference type="ChEBI" id="CHEBI:29105"/>
        <label>2</label>
    </ligand>
</feature>
<dbReference type="EC" id="2.7.7.6" evidence="1"/>
<dbReference type="EMBL" id="CP001102">
    <property type="protein sequence ID" value="ACE06691.1"/>
    <property type="molecule type" value="Genomic_DNA"/>
</dbReference>
<dbReference type="RefSeq" id="WP_012473433.1">
    <property type="nucleotide sequence ID" value="NC_010830.1"/>
</dbReference>
<dbReference type="SMR" id="B3ETY9"/>
<dbReference type="STRING" id="452471.Aasi_1395"/>
<dbReference type="KEGG" id="aas:Aasi_1395"/>
<dbReference type="eggNOG" id="COG0086">
    <property type="taxonomic scope" value="Bacteria"/>
</dbReference>
<dbReference type="HOGENOM" id="CLU_000524_3_1_10"/>
<dbReference type="OrthoDB" id="9815296at2"/>
<dbReference type="Proteomes" id="UP000001227">
    <property type="component" value="Chromosome"/>
</dbReference>
<dbReference type="GO" id="GO:0000428">
    <property type="term" value="C:DNA-directed RNA polymerase complex"/>
    <property type="evidence" value="ECO:0007669"/>
    <property type="project" value="UniProtKB-KW"/>
</dbReference>
<dbReference type="GO" id="GO:0003677">
    <property type="term" value="F:DNA binding"/>
    <property type="evidence" value="ECO:0007669"/>
    <property type="project" value="UniProtKB-UniRule"/>
</dbReference>
<dbReference type="GO" id="GO:0003899">
    <property type="term" value="F:DNA-directed RNA polymerase activity"/>
    <property type="evidence" value="ECO:0007669"/>
    <property type="project" value="UniProtKB-UniRule"/>
</dbReference>
<dbReference type="GO" id="GO:0000287">
    <property type="term" value="F:magnesium ion binding"/>
    <property type="evidence" value="ECO:0007669"/>
    <property type="project" value="UniProtKB-UniRule"/>
</dbReference>
<dbReference type="GO" id="GO:0008270">
    <property type="term" value="F:zinc ion binding"/>
    <property type="evidence" value="ECO:0007669"/>
    <property type="project" value="UniProtKB-UniRule"/>
</dbReference>
<dbReference type="GO" id="GO:0006351">
    <property type="term" value="P:DNA-templated transcription"/>
    <property type="evidence" value="ECO:0007669"/>
    <property type="project" value="UniProtKB-UniRule"/>
</dbReference>
<dbReference type="CDD" id="cd02655">
    <property type="entry name" value="RNAP_beta'_C"/>
    <property type="match status" value="1"/>
</dbReference>
<dbReference type="CDD" id="cd01609">
    <property type="entry name" value="RNAP_beta'_N"/>
    <property type="match status" value="1"/>
</dbReference>
<dbReference type="Gene3D" id="1.10.132.30">
    <property type="match status" value="1"/>
</dbReference>
<dbReference type="Gene3D" id="1.10.150.390">
    <property type="match status" value="1"/>
</dbReference>
<dbReference type="Gene3D" id="1.10.1790.20">
    <property type="match status" value="1"/>
</dbReference>
<dbReference type="Gene3D" id="1.10.40.90">
    <property type="match status" value="1"/>
</dbReference>
<dbReference type="Gene3D" id="2.40.40.20">
    <property type="match status" value="1"/>
</dbReference>
<dbReference type="Gene3D" id="2.40.50.100">
    <property type="match status" value="3"/>
</dbReference>
<dbReference type="Gene3D" id="4.10.860.120">
    <property type="entry name" value="RNA polymerase II, clamp domain"/>
    <property type="match status" value="1"/>
</dbReference>
<dbReference type="Gene3D" id="1.10.274.100">
    <property type="entry name" value="RNA polymerase Rpb1, domain 3"/>
    <property type="match status" value="2"/>
</dbReference>
<dbReference type="HAMAP" id="MF_01322">
    <property type="entry name" value="RNApol_bact_RpoC"/>
    <property type="match status" value="1"/>
</dbReference>
<dbReference type="InterPro" id="IPR045867">
    <property type="entry name" value="DNA-dir_RpoC_beta_prime"/>
</dbReference>
<dbReference type="InterPro" id="IPR012754">
    <property type="entry name" value="DNA-dir_RpoC_beta_prime_bact"/>
</dbReference>
<dbReference type="InterPro" id="IPR000722">
    <property type="entry name" value="RNA_pol_asu"/>
</dbReference>
<dbReference type="InterPro" id="IPR006592">
    <property type="entry name" value="RNA_pol_N"/>
</dbReference>
<dbReference type="InterPro" id="IPR007080">
    <property type="entry name" value="RNA_pol_Rpb1_1"/>
</dbReference>
<dbReference type="InterPro" id="IPR007066">
    <property type="entry name" value="RNA_pol_Rpb1_3"/>
</dbReference>
<dbReference type="InterPro" id="IPR042102">
    <property type="entry name" value="RNA_pol_Rpb1_3_sf"/>
</dbReference>
<dbReference type="InterPro" id="IPR007083">
    <property type="entry name" value="RNA_pol_Rpb1_4"/>
</dbReference>
<dbReference type="InterPro" id="IPR007081">
    <property type="entry name" value="RNA_pol_Rpb1_5"/>
</dbReference>
<dbReference type="InterPro" id="IPR044893">
    <property type="entry name" value="RNA_pol_Rpb1_clamp_domain"/>
</dbReference>
<dbReference type="InterPro" id="IPR038120">
    <property type="entry name" value="Rpb1_funnel_sf"/>
</dbReference>
<dbReference type="NCBIfam" id="TIGR02386">
    <property type="entry name" value="rpoC_TIGR"/>
    <property type="match status" value="1"/>
</dbReference>
<dbReference type="PANTHER" id="PTHR19376">
    <property type="entry name" value="DNA-DIRECTED RNA POLYMERASE"/>
    <property type="match status" value="1"/>
</dbReference>
<dbReference type="PANTHER" id="PTHR19376:SF54">
    <property type="entry name" value="DNA-DIRECTED RNA POLYMERASE SUBUNIT BETA"/>
    <property type="match status" value="1"/>
</dbReference>
<dbReference type="Pfam" id="PF04997">
    <property type="entry name" value="RNA_pol_Rpb1_1"/>
    <property type="match status" value="1"/>
</dbReference>
<dbReference type="Pfam" id="PF00623">
    <property type="entry name" value="RNA_pol_Rpb1_2"/>
    <property type="match status" value="1"/>
</dbReference>
<dbReference type="Pfam" id="PF04983">
    <property type="entry name" value="RNA_pol_Rpb1_3"/>
    <property type="match status" value="1"/>
</dbReference>
<dbReference type="Pfam" id="PF05000">
    <property type="entry name" value="RNA_pol_Rpb1_4"/>
    <property type="match status" value="1"/>
</dbReference>
<dbReference type="Pfam" id="PF04998">
    <property type="entry name" value="RNA_pol_Rpb1_5"/>
    <property type="match status" value="1"/>
</dbReference>
<dbReference type="SMART" id="SM00663">
    <property type="entry name" value="RPOLA_N"/>
    <property type="match status" value="1"/>
</dbReference>
<dbReference type="SUPFAM" id="SSF64484">
    <property type="entry name" value="beta and beta-prime subunits of DNA dependent RNA-polymerase"/>
    <property type="match status" value="1"/>
</dbReference>
<protein>
    <recommendedName>
        <fullName evidence="1">DNA-directed RNA polymerase subunit beta'</fullName>
        <shortName evidence="1">RNAP subunit beta'</shortName>
        <ecNumber evidence="1">2.7.7.6</ecNumber>
    </recommendedName>
    <alternativeName>
        <fullName evidence="1">RNA polymerase subunit beta'</fullName>
    </alternativeName>
    <alternativeName>
        <fullName evidence="1">Transcriptase subunit beta'</fullName>
    </alternativeName>
</protein>
<reference key="1">
    <citation type="journal article" date="2010" name="J. Bacteriol.">
        <title>The genome of the amoeba symbiont 'Candidatus Amoebophilus asiaticus' reveals common mechanisms for host cell interaction among amoeba-associated bacteria.</title>
        <authorList>
            <person name="Schmitz-Esser S."/>
            <person name="Tischler P."/>
            <person name="Arnold R."/>
            <person name="Montanaro J."/>
            <person name="Wagner M."/>
            <person name="Rattei T."/>
            <person name="Horn M."/>
        </authorList>
    </citation>
    <scope>NUCLEOTIDE SEQUENCE [LARGE SCALE GENOMIC DNA]</scope>
    <source>
        <strain>5a2</strain>
    </source>
</reference>
<accession>B3ETY9</accession>
<gene>
    <name evidence="1" type="primary">rpoC</name>
    <name type="ordered locus">Aasi_1395</name>
</gene>
<comment type="function">
    <text evidence="1">DNA-dependent RNA polymerase catalyzes the transcription of DNA into RNA using the four ribonucleoside triphosphates as substrates.</text>
</comment>
<comment type="catalytic activity">
    <reaction evidence="1">
        <text>RNA(n) + a ribonucleoside 5'-triphosphate = RNA(n+1) + diphosphate</text>
        <dbReference type="Rhea" id="RHEA:21248"/>
        <dbReference type="Rhea" id="RHEA-COMP:14527"/>
        <dbReference type="Rhea" id="RHEA-COMP:17342"/>
        <dbReference type="ChEBI" id="CHEBI:33019"/>
        <dbReference type="ChEBI" id="CHEBI:61557"/>
        <dbReference type="ChEBI" id="CHEBI:140395"/>
        <dbReference type="EC" id="2.7.7.6"/>
    </reaction>
</comment>
<comment type="cofactor">
    <cofactor evidence="1">
        <name>Mg(2+)</name>
        <dbReference type="ChEBI" id="CHEBI:18420"/>
    </cofactor>
    <text evidence="1">Binds 1 Mg(2+) ion per subunit.</text>
</comment>
<comment type="cofactor">
    <cofactor evidence="1">
        <name>Zn(2+)</name>
        <dbReference type="ChEBI" id="CHEBI:29105"/>
    </cofactor>
    <text evidence="1">Binds 2 Zn(2+) ions per subunit.</text>
</comment>
<comment type="subunit">
    <text evidence="1">The RNAP catalytic core consists of 2 alpha, 1 beta, 1 beta' and 1 omega subunit. When a sigma factor is associated with the core the holoenzyme is formed, which can initiate transcription.</text>
</comment>
<comment type="similarity">
    <text evidence="1">Belongs to the RNA polymerase beta' chain family.</text>
</comment>
<proteinExistence type="inferred from homology"/>
<organism>
    <name type="scientific">Amoebophilus asiaticus (strain 5a2)</name>
    <dbReference type="NCBI Taxonomy" id="452471"/>
    <lineage>
        <taxon>Bacteria</taxon>
        <taxon>Pseudomonadati</taxon>
        <taxon>Bacteroidota</taxon>
        <taxon>Cytophagia</taxon>
        <taxon>Cytophagales</taxon>
        <taxon>Amoebophilaceae</taxon>
        <taxon>Candidatus Amoebophilus</taxon>
    </lineage>
</organism>
<evidence type="ECO:0000255" key="1">
    <source>
        <dbReference type="HAMAP-Rule" id="MF_01322"/>
    </source>
</evidence>
<keyword id="KW-0240">DNA-directed RNA polymerase</keyword>
<keyword id="KW-0460">Magnesium</keyword>
<keyword id="KW-0479">Metal-binding</keyword>
<keyword id="KW-0548">Nucleotidyltransferase</keyword>
<keyword id="KW-1185">Reference proteome</keyword>
<keyword id="KW-0804">Transcription</keyword>
<keyword id="KW-0808">Transferase</keyword>
<keyword id="KW-0862">Zinc</keyword>
<name>RPOC_AMOA5</name>
<sequence length="1433" mass="160565">MLARKDTRVKSDFSEIIISLASPESILERSRGEVTQPETINYRTYKPEMKGLFCERIFGPVKDWECHCGKYKRIRYKGIICDRCGVEVTEKKVRRERTGHIELVIPVAHTWYFRSLPSKIGNLLGFPTKKLDQIIYYERYVVVQPGIKAEEGLSYMDFLTEEEYLDILDSLPRENQLLDDSDPKKFIAKMGAEALEFMLSRIDLDTLSSELREQAHTDTSQQRRIEALKRLKIVEAFRDAKTRIANRPEWMVMRIIPVIPPELRPLVPLDGGKFATSDLNDLYRRVIIRNNRLKRLIDIKAPEVILRNEKRMLQEAVDSLFDNSRKVNTVVAEGSRVLKSFSDILKGKQGRFRQNLLGKRVDYSGRSVIVVGPELKLHECGLPKDMAAELFKPFIIRRLIERGIVKTVKSAKKLVEKKTPVVWDILENVLKGHPILLNRAPTLHRLSIQAFQPKLIEGKAIQLHPLVCAAFNADFDGDQMAVHVPLSHEAIAEASLIMLASHNILNSANGTPLAVPTKDMILGLYYLTKGRKSTPEHPVKGEGMTFFSAQEVIIGIDTGQVSIHALVKVKIKDKDEQGETIEHIVDTIAGRVVFNQYVPEELGFINELLTSKKLQHITSQVYRLVGTSRATQFLDDVKSLGFRNAYKAGVSFALDDIKVPTIKFELIEQAQREVNAVQENYLMGLITDNERYNQIIDIWTRVNTQVTVFLMQELEEDRQGFNSIFMMMNSGARGSREQVRQLGGMRGLMGKPQKQLQGSVGEIIENPILSNFKEGLDVLEYFISTHGARKGLADTALKTADAGYLTRRLVDVAQDVITTEEDCGTLRGVTITTSINKDEVAESISERTLGRISLNDIYDPVTNNLLVNAGEEITEEIAAYIESVGIESIEVRSVLTCETRRGICTKCYGRNLSTGKLVQIGEAVGVIAAQSIGEPGTQLTLRTFHVGGAASSIGVESNIQATDKGVLQFEDFNTIKTTNPQGEQLDVIISRSCEVRLLNPQDNRILMHKHVPYGAYLRVKQGELIEKGQEICYWDPYNAVILTSIDGEIEFHSIEEGITYKEEYDEQTGYKEKVIIESKDKTKNPSITVKGSSGEAINYNIPVKARLIVEDGTKIKAGHPLVKIPRVVSLSKDITGGLPRVTELFEARDPSNPSIVSEIDGFVTYGPIKRGSREIFVESKDGIRRKYLVPLSKHILVQDNDYIKAGYPISDGNTSPSSILHIKGPIAVQEYIAKELQAVYRLQGVKINDKHIEVIIRQMLSKLEVIESGDTTFLPGQTVSKFTFREGNDQLLDKKVVIDAGSSSVLRVGQIITARALHEENSNLKRDKLSLVQARDAQPAIARLKLQGITQASLDTKSFISAASFQDTTRVLSEAAIRGKRDRLQGLKENVIVGHLIPTGTGLPRYSKMIIGLREDYENLVASREKQAATDNI</sequence>